<dbReference type="EC" id="5.4.2.12" evidence="1"/>
<dbReference type="EMBL" id="AL513382">
    <property type="protein sequence ID" value="CAD03290.1"/>
    <property type="status" value="ALT_INIT"/>
    <property type="molecule type" value="Genomic_DNA"/>
</dbReference>
<dbReference type="EMBL" id="AE014613">
    <property type="protein sequence ID" value="AAO71297.1"/>
    <property type="status" value="ALT_INIT"/>
    <property type="molecule type" value="Genomic_DNA"/>
</dbReference>
<dbReference type="PIR" id="AF0974">
    <property type="entry name" value="AF0974"/>
</dbReference>
<dbReference type="RefSeq" id="NP_458223.3">
    <property type="nucleotide sequence ID" value="NC_003198.1"/>
</dbReference>
<dbReference type="SMR" id="Q8Z2F0"/>
<dbReference type="STRING" id="220341.gene:17587934"/>
<dbReference type="KEGG" id="stt:t3815"/>
<dbReference type="KEGG" id="sty:STY4091"/>
<dbReference type="PATRIC" id="fig|220341.7.peg.4177"/>
<dbReference type="eggNOG" id="COG0696">
    <property type="taxonomic scope" value="Bacteria"/>
</dbReference>
<dbReference type="HOGENOM" id="CLU_026099_2_0_6"/>
<dbReference type="OMA" id="FMDGRDT"/>
<dbReference type="OrthoDB" id="9800863at2"/>
<dbReference type="UniPathway" id="UPA00109">
    <property type="reaction ID" value="UER00186"/>
</dbReference>
<dbReference type="Proteomes" id="UP000000541">
    <property type="component" value="Chromosome"/>
</dbReference>
<dbReference type="Proteomes" id="UP000002670">
    <property type="component" value="Chromosome"/>
</dbReference>
<dbReference type="GO" id="GO:0005829">
    <property type="term" value="C:cytosol"/>
    <property type="evidence" value="ECO:0007669"/>
    <property type="project" value="TreeGrafter"/>
</dbReference>
<dbReference type="GO" id="GO:0030145">
    <property type="term" value="F:manganese ion binding"/>
    <property type="evidence" value="ECO:0007669"/>
    <property type="project" value="UniProtKB-UniRule"/>
</dbReference>
<dbReference type="GO" id="GO:0004619">
    <property type="term" value="F:phosphoglycerate mutase activity"/>
    <property type="evidence" value="ECO:0007669"/>
    <property type="project" value="UniProtKB-EC"/>
</dbReference>
<dbReference type="GO" id="GO:0006007">
    <property type="term" value="P:glucose catabolic process"/>
    <property type="evidence" value="ECO:0007669"/>
    <property type="project" value="InterPro"/>
</dbReference>
<dbReference type="GO" id="GO:0006096">
    <property type="term" value="P:glycolytic process"/>
    <property type="evidence" value="ECO:0007669"/>
    <property type="project" value="UniProtKB-UniRule"/>
</dbReference>
<dbReference type="CDD" id="cd16010">
    <property type="entry name" value="iPGM"/>
    <property type="match status" value="1"/>
</dbReference>
<dbReference type="FunFam" id="3.40.1450.10:FF:000001">
    <property type="entry name" value="2,3-bisphosphoglycerate-independent phosphoglycerate mutase"/>
    <property type="match status" value="1"/>
</dbReference>
<dbReference type="FunFam" id="3.40.720.10:FF:000001">
    <property type="entry name" value="2,3-bisphosphoglycerate-independent phosphoglycerate mutase"/>
    <property type="match status" value="1"/>
</dbReference>
<dbReference type="Gene3D" id="3.40.720.10">
    <property type="entry name" value="Alkaline Phosphatase, subunit A"/>
    <property type="match status" value="1"/>
</dbReference>
<dbReference type="Gene3D" id="3.40.1450.10">
    <property type="entry name" value="BPG-independent phosphoglycerate mutase, domain B"/>
    <property type="match status" value="1"/>
</dbReference>
<dbReference type="HAMAP" id="MF_01038">
    <property type="entry name" value="GpmI"/>
    <property type="match status" value="1"/>
</dbReference>
<dbReference type="InterPro" id="IPR017850">
    <property type="entry name" value="Alkaline_phosphatase_core_sf"/>
</dbReference>
<dbReference type="InterPro" id="IPR011258">
    <property type="entry name" value="BPG-indep_PGM_N"/>
</dbReference>
<dbReference type="InterPro" id="IPR006124">
    <property type="entry name" value="Metalloenzyme"/>
</dbReference>
<dbReference type="InterPro" id="IPR036646">
    <property type="entry name" value="PGAM_B_sf"/>
</dbReference>
<dbReference type="InterPro" id="IPR005995">
    <property type="entry name" value="Pgm_bpd_ind"/>
</dbReference>
<dbReference type="NCBIfam" id="TIGR01307">
    <property type="entry name" value="pgm_bpd_ind"/>
    <property type="match status" value="1"/>
</dbReference>
<dbReference type="NCBIfam" id="NF003897">
    <property type="entry name" value="PRK05434.1-5"/>
    <property type="match status" value="1"/>
</dbReference>
<dbReference type="PANTHER" id="PTHR31637">
    <property type="entry name" value="2,3-BISPHOSPHOGLYCERATE-INDEPENDENT PHOSPHOGLYCERATE MUTASE"/>
    <property type="match status" value="1"/>
</dbReference>
<dbReference type="PANTHER" id="PTHR31637:SF0">
    <property type="entry name" value="2,3-BISPHOSPHOGLYCERATE-INDEPENDENT PHOSPHOGLYCERATE MUTASE"/>
    <property type="match status" value="1"/>
</dbReference>
<dbReference type="Pfam" id="PF06415">
    <property type="entry name" value="iPGM_N"/>
    <property type="match status" value="1"/>
</dbReference>
<dbReference type="Pfam" id="PF01676">
    <property type="entry name" value="Metalloenzyme"/>
    <property type="match status" value="1"/>
</dbReference>
<dbReference type="PIRSF" id="PIRSF001492">
    <property type="entry name" value="IPGAM"/>
    <property type="match status" value="1"/>
</dbReference>
<dbReference type="SUPFAM" id="SSF64158">
    <property type="entry name" value="2,3-Bisphosphoglycerate-independent phosphoglycerate mutase, substrate-binding domain"/>
    <property type="match status" value="1"/>
</dbReference>
<dbReference type="SUPFAM" id="SSF53649">
    <property type="entry name" value="Alkaline phosphatase-like"/>
    <property type="match status" value="1"/>
</dbReference>
<protein>
    <recommendedName>
        <fullName evidence="1">2,3-bisphosphoglycerate-independent phosphoglycerate mutase</fullName>
        <shortName evidence="1">BPG-independent PGAM</shortName>
        <shortName evidence="1">Phosphoglyceromutase</shortName>
        <shortName evidence="1">iPGM</shortName>
        <ecNumber evidence="1">5.4.2.12</ecNumber>
    </recommendedName>
</protein>
<evidence type="ECO:0000255" key="1">
    <source>
        <dbReference type="HAMAP-Rule" id="MF_01038"/>
    </source>
</evidence>
<evidence type="ECO:0000305" key="2"/>
<keyword id="KW-0324">Glycolysis</keyword>
<keyword id="KW-0413">Isomerase</keyword>
<keyword id="KW-0464">Manganese</keyword>
<keyword id="KW-0479">Metal-binding</keyword>
<sequence length="514" mass="56313">MSVSKKPMVLVILDGYGYREEQQDNAILNAKTPVMDALWAKRPHTLIDASGLEVGLPDRQMGNSEVGHVNLGAGRIVYQDLTRLDVEIKERTFFANPVLTNAVDQAKNAGKAVHIMGLLSAGGVHSHEDHIMAMVELAAERGAEKIYLHAFLDGRDTPPRSAEASLKKFEDKFAALGKGRVASIVGRYYAMDRDNRWDRVEKAYDLMTLAQGEFQADTAVAGLQAAYARDENDEFVKATVIRAEGQADAAMEDGDTLIFMNFRADRAREITRAFVNADFDGFARKKVVNLNFVMLTEYAADIKTAVAYPPASLANTFGEWMAKNDKTQLRISETEKYAHVTFFFNGGVEEPFAGEERILINSPKVATYDLQPEMSSAELTEKLVAAIESGKYDTIICNYPNGDMVGHTGVMEAAIKAVEALDNCIEQVTKAVESVGGQLLITADHGNAEQMRDPATGQEHTAHTNLPVPLIYVGEKNVKAVEGGKLSDIAPTMLSLMGMEIPQEMTGKPLFIVE</sequence>
<accession>Q8Z2F0</accession>
<proteinExistence type="inferred from homology"/>
<comment type="function">
    <text evidence="1">Catalyzes the interconversion of 2-phosphoglycerate and 3-phosphoglycerate.</text>
</comment>
<comment type="catalytic activity">
    <reaction evidence="1">
        <text>(2R)-2-phosphoglycerate = (2R)-3-phosphoglycerate</text>
        <dbReference type="Rhea" id="RHEA:15901"/>
        <dbReference type="ChEBI" id="CHEBI:58272"/>
        <dbReference type="ChEBI" id="CHEBI:58289"/>
        <dbReference type="EC" id="5.4.2.12"/>
    </reaction>
</comment>
<comment type="cofactor">
    <cofactor evidence="1">
        <name>Mn(2+)</name>
        <dbReference type="ChEBI" id="CHEBI:29035"/>
    </cofactor>
    <text evidence="1">Binds 2 manganese ions per subunit.</text>
</comment>
<comment type="pathway">
    <text evidence="1">Carbohydrate degradation; glycolysis; pyruvate from D-glyceraldehyde 3-phosphate: step 3/5.</text>
</comment>
<comment type="subunit">
    <text evidence="1">Monomer.</text>
</comment>
<comment type="similarity">
    <text evidence="1">Belongs to the BPG-independent phosphoglycerate mutase family.</text>
</comment>
<comment type="sequence caution" evidence="2">
    <conflict type="erroneous initiation">
        <sequence resource="EMBL-CDS" id="AAO71297"/>
    </conflict>
    <text>Truncated N-terminus.</text>
</comment>
<comment type="sequence caution" evidence="2">
    <conflict type="erroneous initiation">
        <sequence resource="EMBL-CDS" id="CAD03290"/>
    </conflict>
    <text>Truncated N-terminus.</text>
</comment>
<organism>
    <name type="scientific">Salmonella typhi</name>
    <dbReference type="NCBI Taxonomy" id="90370"/>
    <lineage>
        <taxon>Bacteria</taxon>
        <taxon>Pseudomonadati</taxon>
        <taxon>Pseudomonadota</taxon>
        <taxon>Gammaproteobacteria</taxon>
        <taxon>Enterobacterales</taxon>
        <taxon>Enterobacteriaceae</taxon>
        <taxon>Salmonella</taxon>
    </lineage>
</organism>
<reference key="1">
    <citation type="journal article" date="2001" name="Nature">
        <title>Complete genome sequence of a multiple drug resistant Salmonella enterica serovar Typhi CT18.</title>
        <authorList>
            <person name="Parkhill J."/>
            <person name="Dougan G."/>
            <person name="James K.D."/>
            <person name="Thomson N.R."/>
            <person name="Pickard D."/>
            <person name="Wain J."/>
            <person name="Churcher C.M."/>
            <person name="Mungall K.L."/>
            <person name="Bentley S.D."/>
            <person name="Holden M.T.G."/>
            <person name="Sebaihia M."/>
            <person name="Baker S."/>
            <person name="Basham D."/>
            <person name="Brooks K."/>
            <person name="Chillingworth T."/>
            <person name="Connerton P."/>
            <person name="Cronin A."/>
            <person name="Davis P."/>
            <person name="Davies R.M."/>
            <person name="Dowd L."/>
            <person name="White N."/>
            <person name="Farrar J."/>
            <person name="Feltwell T."/>
            <person name="Hamlin N."/>
            <person name="Haque A."/>
            <person name="Hien T.T."/>
            <person name="Holroyd S."/>
            <person name="Jagels K."/>
            <person name="Krogh A."/>
            <person name="Larsen T.S."/>
            <person name="Leather S."/>
            <person name="Moule S."/>
            <person name="O'Gaora P."/>
            <person name="Parry C."/>
            <person name="Quail M.A."/>
            <person name="Rutherford K.M."/>
            <person name="Simmonds M."/>
            <person name="Skelton J."/>
            <person name="Stevens K."/>
            <person name="Whitehead S."/>
            <person name="Barrell B.G."/>
        </authorList>
    </citation>
    <scope>NUCLEOTIDE SEQUENCE [LARGE SCALE GENOMIC DNA]</scope>
    <source>
        <strain>CT18</strain>
    </source>
</reference>
<reference key="2">
    <citation type="journal article" date="2003" name="J. Bacteriol.">
        <title>Comparative genomics of Salmonella enterica serovar Typhi strains Ty2 and CT18.</title>
        <authorList>
            <person name="Deng W."/>
            <person name="Liou S.-R."/>
            <person name="Plunkett G. III"/>
            <person name="Mayhew G.F."/>
            <person name="Rose D.J."/>
            <person name="Burland V."/>
            <person name="Kodoyianni V."/>
            <person name="Schwartz D.C."/>
            <person name="Blattner F.R."/>
        </authorList>
    </citation>
    <scope>NUCLEOTIDE SEQUENCE [LARGE SCALE GENOMIC DNA]</scope>
    <source>
        <strain>ATCC 700931 / Ty2</strain>
    </source>
</reference>
<gene>
    <name evidence="1" type="primary">gpmI</name>
    <name type="ordered locus">STY4091</name>
    <name type="ordered locus">t3815</name>
</gene>
<name>GPMI_SALTI</name>
<feature type="chain" id="PRO_0000212199" description="2,3-bisphosphoglycerate-independent phosphoglycerate mutase">
    <location>
        <begin position="1"/>
        <end position="514"/>
    </location>
</feature>
<feature type="active site" description="Phosphoserine intermediate" evidence="1">
    <location>
        <position position="64"/>
    </location>
</feature>
<feature type="binding site" evidence="1">
    <location>
        <position position="14"/>
    </location>
    <ligand>
        <name>Mn(2+)</name>
        <dbReference type="ChEBI" id="CHEBI:29035"/>
        <label>2</label>
    </ligand>
</feature>
<feature type="binding site" evidence="1">
    <location>
        <position position="64"/>
    </location>
    <ligand>
        <name>Mn(2+)</name>
        <dbReference type="ChEBI" id="CHEBI:29035"/>
        <label>2</label>
    </ligand>
</feature>
<feature type="binding site" evidence="1">
    <location>
        <position position="125"/>
    </location>
    <ligand>
        <name>substrate</name>
    </ligand>
</feature>
<feature type="binding site" evidence="1">
    <location>
        <begin position="155"/>
        <end position="156"/>
    </location>
    <ligand>
        <name>substrate</name>
    </ligand>
</feature>
<feature type="binding site" evidence="1">
    <location>
        <position position="187"/>
    </location>
    <ligand>
        <name>substrate</name>
    </ligand>
</feature>
<feature type="binding site" evidence="1">
    <location>
        <position position="193"/>
    </location>
    <ligand>
        <name>substrate</name>
    </ligand>
</feature>
<feature type="binding site" evidence="1">
    <location>
        <begin position="263"/>
        <end position="266"/>
    </location>
    <ligand>
        <name>substrate</name>
    </ligand>
</feature>
<feature type="binding site" evidence="1">
    <location>
        <position position="336"/>
    </location>
    <ligand>
        <name>substrate</name>
    </ligand>
</feature>
<feature type="binding site" evidence="1">
    <location>
        <position position="403"/>
    </location>
    <ligand>
        <name>Mn(2+)</name>
        <dbReference type="ChEBI" id="CHEBI:29035"/>
        <label>1</label>
    </ligand>
</feature>
<feature type="binding site" evidence="1">
    <location>
        <position position="407"/>
    </location>
    <ligand>
        <name>Mn(2+)</name>
        <dbReference type="ChEBI" id="CHEBI:29035"/>
        <label>1</label>
    </ligand>
</feature>
<feature type="binding site" evidence="1">
    <location>
        <position position="444"/>
    </location>
    <ligand>
        <name>Mn(2+)</name>
        <dbReference type="ChEBI" id="CHEBI:29035"/>
        <label>2</label>
    </ligand>
</feature>
<feature type="binding site" evidence="1">
    <location>
        <position position="445"/>
    </location>
    <ligand>
        <name>Mn(2+)</name>
        <dbReference type="ChEBI" id="CHEBI:29035"/>
        <label>2</label>
    </ligand>
</feature>
<feature type="binding site" evidence="1">
    <location>
        <position position="463"/>
    </location>
    <ligand>
        <name>Mn(2+)</name>
        <dbReference type="ChEBI" id="CHEBI:29035"/>
        <label>1</label>
    </ligand>
</feature>